<organism>
    <name type="scientific">Drosophila melanogaster</name>
    <name type="common">Fruit fly</name>
    <dbReference type="NCBI Taxonomy" id="7227"/>
    <lineage>
        <taxon>Eukaryota</taxon>
        <taxon>Metazoa</taxon>
        <taxon>Ecdysozoa</taxon>
        <taxon>Arthropoda</taxon>
        <taxon>Hexapoda</taxon>
        <taxon>Insecta</taxon>
        <taxon>Pterygota</taxon>
        <taxon>Neoptera</taxon>
        <taxon>Endopterygota</taxon>
        <taxon>Diptera</taxon>
        <taxon>Brachycera</taxon>
        <taxon>Muscomorpha</taxon>
        <taxon>Ephydroidea</taxon>
        <taxon>Drosophilidae</taxon>
        <taxon>Drosophila</taxon>
        <taxon>Sophophora</taxon>
    </lineage>
</organism>
<name>QTRT2_DROME</name>
<sequence length="418" mass="46585">MKFAIESISKNSGRLGQLRIRDGGPEFKTPLLLQTTKGGSIPWLSADVFETHVSRKPQVLQFTLSTMEQMTEALTHWNSGGGRGLSDYVGLPGHLNILLLRDPCETTPSGGNDRDILPLFTRRGKESLSSERYMEIVASFKPDMYEGLCDADTNLESAKKRVQKSVDRTEKFMQYIYEHRGKVNSTLLAPIVGGYNTFARTQSIKHAREQPAGSYGGYIFEGFHANGLSATTLDTSKLLPIVEHCVKQLEEDKPKILPGAYTPLTVLELIQQGIDVFDTSYAYCASLNFKALSFSFVQDAVEHVPFLDITDEAIKEDFTPPLSNCNCLTCQKHTRAYLHHLYKTNELLGPILLMVHNLYHYMAFFEKIRESVAKDTLPQLTELVRNQNGKTQVDYSIAANTKVISKATMGKGFAAAAV</sequence>
<reference key="1">
    <citation type="journal article" date="2000" name="Science">
        <title>The genome sequence of Drosophila melanogaster.</title>
        <authorList>
            <person name="Adams M.D."/>
            <person name="Celniker S.E."/>
            <person name="Holt R.A."/>
            <person name="Evans C.A."/>
            <person name="Gocayne J.D."/>
            <person name="Amanatides P.G."/>
            <person name="Scherer S.E."/>
            <person name="Li P.W."/>
            <person name="Hoskins R.A."/>
            <person name="Galle R.F."/>
            <person name="George R.A."/>
            <person name="Lewis S.E."/>
            <person name="Richards S."/>
            <person name="Ashburner M."/>
            <person name="Henderson S.N."/>
            <person name="Sutton G.G."/>
            <person name="Wortman J.R."/>
            <person name="Yandell M.D."/>
            <person name="Zhang Q."/>
            <person name="Chen L.X."/>
            <person name="Brandon R.C."/>
            <person name="Rogers Y.-H.C."/>
            <person name="Blazej R.G."/>
            <person name="Champe M."/>
            <person name="Pfeiffer B.D."/>
            <person name="Wan K.H."/>
            <person name="Doyle C."/>
            <person name="Baxter E.G."/>
            <person name="Helt G."/>
            <person name="Nelson C.R."/>
            <person name="Miklos G.L.G."/>
            <person name="Abril J.F."/>
            <person name="Agbayani A."/>
            <person name="An H.-J."/>
            <person name="Andrews-Pfannkoch C."/>
            <person name="Baldwin D."/>
            <person name="Ballew R.M."/>
            <person name="Basu A."/>
            <person name="Baxendale J."/>
            <person name="Bayraktaroglu L."/>
            <person name="Beasley E.M."/>
            <person name="Beeson K.Y."/>
            <person name="Benos P.V."/>
            <person name="Berman B.P."/>
            <person name="Bhandari D."/>
            <person name="Bolshakov S."/>
            <person name="Borkova D."/>
            <person name="Botchan M.R."/>
            <person name="Bouck J."/>
            <person name="Brokstein P."/>
            <person name="Brottier P."/>
            <person name="Burtis K.C."/>
            <person name="Busam D.A."/>
            <person name="Butler H."/>
            <person name="Cadieu E."/>
            <person name="Center A."/>
            <person name="Chandra I."/>
            <person name="Cherry J.M."/>
            <person name="Cawley S."/>
            <person name="Dahlke C."/>
            <person name="Davenport L.B."/>
            <person name="Davies P."/>
            <person name="de Pablos B."/>
            <person name="Delcher A."/>
            <person name="Deng Z."/>
            <person name="Mays A.D."/>
            <person name="Dew I."/>
            <person name="Dietz S.M."/>
            <person name="Dodson K."/>
            <person name="Doup L.E."/>
            <person name="Downes M."/>
            <person name="Dugan-Rocha S."/>
            <person name="Dunkov B.C."/>
            <person name="Dunn P."/>
            <person name="Durbin K.J."/>
            <person name="Evangelista C.C."/>
            <person name="Ferraz C."/>
            <person name="Ferriera S."/>
            <person name="Fleischmann W."/>
            <person name="Fosler C."/>
            <person name="Gabrielian A.E."/>
            <person name="Garg N.S."/>
            <person name="Gelbart W.M."/>
            <person name="Glasser K."/>
            <person name="Glodek A."/>
            <person name="Gong F."/>
            <person name="Gorrell J.H."/>
            <person name="Gu Z."/>
            <person name="Guan P."/>
            <person name="Harris M."/>
            <person name="Harris N.L."/>
            <person name="Harvey D.A."/>
            <person name="Heiman T.J."/>
            <person name="Hernandez J.R."/>
            <person name="Houck J."/>
            <person name="Hostin D."/>
            <person name="Houston K.A."/>
            <person name="Howland T.J."/>
            <person name="Wei M.-H."/>
            <person name="Ibegwam C."/>
            <person name="Jalali M."/>
            <person name="Kalush F."/>
            <person name="Karpen G.H."/>
            <person name="Ke Z."/>
            <person name="Kennison J.A."/>
            <person name="Ketchum K.A."/>
            <person name="Kimmel B.E."/>
            <person name="Kodira C.D."/>
            <person name="Kraft C.L."/>
            <person name="Kravitz S."/>
            <person name="Kulp D."/>
            <person name="Lai Z."/>
            <person name="Lasko P."/>
            <person name="Lei Y."/>
            <person name="Levitsky A.A."/>
            <person name="Li J.H."/>
            <person name="Li Z."/>
            <person name="Liang Y."/>
            <person name="Lin X."/>
            <person name="Liu X."/>
            <person name="Mattei B."/>
            <person name="McIntosh T.C."/>
            <person name="McLeod M.P."/>
            <person name="McPherson D."/>
            <person name="Merkulov G."/>
            <person name="Milshina N.V."/>
            <person name="Mobarry C."/>
            <person name="Morris J."/>
            <person name="Moshrefi A."/>
            <person name="Mount S.M."/>
            <person name="Moy M."/>
            <person name="Murphy B."/>
            <person name="Murphy L."/>
            <person name="Muzny D.M."/>
            <person name="Nelson D.L."/>
            <person name="Nelson D.R."/>
            <person name="Nelson K.A."/>
            <person name="Nixon K."/>
            <person name="Nusskern D.R."/>
            <person name="Pacleb J.M."/>
            <person name="Palazzolo M."/>
            <person name="Pittman G.S."/>
            <person name="Pan S."/>
            <person name="Pollard J."/>
            <person name="Puri V."/>
            <person name="Reese M.G."/>
            <person name="Reinert K."/>
            <person name="Remington K."/>
            <person name="Saunders R.D.C."/>
            <person name="Scheeler F."/>
            <person name="Shen H."/>
            <person name="Shue B.C."/>
            <person name="Siden-Kiamos I."/>
            <person name="Simpson M."/>
            <person name="Skupski M.P."/>
            <person name="Smith T.J."/>
            <person name="Spier E."/>
            <person name="Spradling A.C."/>
            <person name="Stapleton M."/>
            <person name="Strong R."/>
            <person name="Sun E."/>
            <person name="Svirskas R."/>
            <person name="Tector C."/>
            <person name="Turner R."/>
            <person name="Venter E."/>
            <person name="Wang A.H."/>
            <person name="Wang X."/>
            <person name="Wang Z.-Y."/>
            <person name="Wassarman D.A."/>
            <person name="Weinstock G.M."/>
            <person name="Weissenbach J."/>
            <person name="Williams S.M."/>
            <person name="Woodage T."/>
            <person name="Worley K.C."/>
            <person name="Wu D."/>
            <person name="Yang S."/>
            <person name="Yao Q.A."/>
            <person name="Ye J."/>
            <person name="Yeh R.-F."/>
            <person name="Zaveri J.S."/>
            <person name="Zhan M."/>
            <person name="Zhang G."/>
            <person name="Zhao Q."/>
            <person name="Zheng L."/>
            <person name="Zheng X.H."/>
            <person name="Zhong F.N."/>
            <person name="Zhong W."/>
            <person name="Zhou X."/>
            <person name="Zhu S.C."/>
            <person name="Zhu X."/>
            <person name="Smith H.O."/>
            <person name="Gibbs R.A."/>
            <person name="Myers E.W."/>
            <person name="Rubin G.M."/>
            <person name="Venter J.C."/>
        </authorList>
    </citation>
    <scope>NUCLEOTIDE SEQUENCE [LARGE SCALE GENOMIC DNA]</scope>
    <source>
        <strain>Berkeley</strain>
    </source>
</reference>
<reference key="2">
    <citation type="journal article" date="2002" name="Genome Biol.">
        <title>Annotation of the Drosophila melanogaster euchromatic genome: a systematic review.</title>
        <authorList>
            <person name="Misra S."/>
            <person name="Crosby M.A."/>
            <person name="Mungall C.J."/>
            <person name="Matthews B.B."/>
            <person name="Campbell K.S."/>
            <person name="Hradecky P."/>
            <person name="Huang Y."/>
            <person name="Kaminker J.S."/>
            <person name="Millburn G.H."/>
            <person name="Prochnik S.E."/>
            <person name="Smith C.D."/>
            <person name="Tupy J.L."/>
            <person name="Whitfield E.J."/>
            <person name="Bayraktaroglu L."/>
            <person name="Berman B.P."/>
            <person name="Bettencourt B.R."/>
            <person name="Celniker S.E."/>
            <person name="de Grey A.D.N.J."/>
            <person name="Drysdale R.A."/>
            <person name="Harris N.L."/>
            <person name="Richter J."/>
            <person name="Russo S."/>
            <person name="Schroeder A.J."/>
            <person name="Shu S.Q."/>
            <person name="Stapleton M."/>
            <person name="Yamada C."/>
            <person name="Ashburner M."/>
            <person name="Gelbart W.M."/>
            <person name="Rubin G.M."/>
            <person name="Lewis S.E."/>
        </authorList>
    </citation>
    <scope>GENOME REANNOTATION</scope>
    <source>
        <strain>Berkeley</strain>
    </source>
</reference>
<reference key="3">
    <citation type="journal article" date="2002" name="Genome Biol.">
        <title>A Drosophila full-length cDNA resource.</title>
        <authorList>
            <person name="Stapleton M."/>
            <person name="Carlson J.W."/>
            <person name="Brokstein P."/>
            <person name="Yu C."/>
            <person name="Champe M."/>
            <person name="George R.A."/>
            <person name="Guarin H."/>
            <person name="Kronmiller B."/>
            <person name="Pacleb J.M."/>
            <person name="Park S."/>
            <person name="Wan K.H."/>
            <person name="Rubin G.M."/>
            <person name="Celniker S.E."/>
        </authorList>
    </citation>
    <scope>NUCLEOTIDE SEQUENCE [LARGE SCALE MRNA]</scope>
    <source>
        <strain>Berkeley</strain>
        <tissue>Embryo</tissue>
    </source>
</reference>
<gene>
    <name type="ORF">CG3434</name>
</gene>
<feature type="chain" id="PRO_0000383936" description="Queuine tRNA-ribosyltransferase accessory subunit 2">
    <location>
        <begin position="1"/>
        <end position="418"/>
    </location>
</feature>
<feature type="binding site" evidence="1">
    <location>
        <position position="325"/>
    </location>
    <ligand>
        <name>Zn(2+)</name>
        <dbReference type="ChEBI" id="CHEBI:29105"/>
    </ligand>
</feature>
<feature type="binding site" evidence="1">
    <location>
        <position position="327"/>
    </location>
    <ligand>
        <name>Zn(2+)</name>
        <dbReference type="ChEBI" id="CHEBI:29105"/>
    </ligand>
</feature>
<feature type="binding site" evidence="1">
    <location>
        <position position="330"/>
    </location>
    <ligand>
        <name>Zn(2+)</name>
        <dbReference type="ChEBI" id="CHEBI:29105"/>
    </ligand>
</feature>
<feature type="binding site" evidence="1">
    <location>
        <position position="356"/>
    </location>
    <ligand>
        <name>Zn(2+)</name>
        <dbReference type="ChEBI" id="CHEBI:29105"/>
    </ligand>
</feature>
<accession>Q9VSZ6</accession>
<proteinExistence type="evidence at transcript level"/>
<protein>
    <recommendedName>
        <fullName evidence="1">Queuine tRNA-ribosyltransferase accessory subunit 2</fullName>
    </recommendedName>
    <alternativeName>
        <fullName evidence="1">Queuine tRNA-ribosyltransferase domain-containing protein 1</fullName>
    </alternativeName>
</protein>
<comment type="function">
    <text evidence="1">Non-catalytic subunit of the queuine tRNA-ribosyltransferase (TGT) that catalyzes the base-exchange of a guanine (G) residue with queuine (Q) at position 34 (anticodon wobble position) in tRNAs with GU(N) anticodons (tRNA-Asp, -Asn, -His and -Tyr), resulting in the hypermodified nucleoside queuosine (7-(((4,5-cis-dihydroxy-2-cyclopenten-1-yl)amino)methyl)-7-deazaguanosine).</text>
</comment>
<comment type="cofactor">
    <cofactor evidence="1">
        <name>Zn(2+)</name>
        <dbReference type="ChEBI" id="CHEBI:29105"/>
    </cofactor>
    <text evidence="1">Binds 1 zinc ion per subunit.</text>
</comment>
<comment type="subunit">
    <text evidence="1">Heterodimer of a catalytic subunit and an accessory subunit.</text>
</comment>
<comment type="subcellular location">
    <subcellularLocation>
        <location evidence="1">Cytoplasm</location>
    </subcellularLocation>
</comment>
<comment type="similarity">
    <text evidence="1">Belongs to the queuine tRNA-ribosyltransferase family. QTRT2 subfamily.</text>
</comment>
<evidence type="ECO:0000255" key="1">
    <source>
        <dbReference type="HAMAP-Rule" id="MF_03043"/>
    </source>
</evidence>
<dbReference type="EMBL" id="AE014296">
    <property type="protein sequence ID" value="AAF50262.1"/>
    <property type="molecule type" value="Genomic_DNA"/>
</dbReference>
<dbReference type="EMBL" id="AY061186">
    <property type="protein sequence ID" value="AAL28734.1"/>
    <property type="molecule type" value="mRNA"/>
</dbReference>
<dbReference type="RefSeq" id="NP_648320.1">
    <property type="nucleotide sequence ID" value="NM_140063.5"/>
</dbReference>
<dbReference type="SMR" id="Q9VSZ6"/>
<dbReference type="BioGRID" id="64491">
    <property type="interactions" value="8"/>
</dbReference>
<dbReference type="FunCoup" id="Q9VSZ6">
    <property type="interactions" value="1527"/>
</dbReference>
<dbReference type="IntAct" id="Q9VSZ6">
    <property type="interactions" value="70"/>
</dbReference>
<dbReference type="STRING" id="7227.FBpp0076201"/>
<dbReference type="PaxDb" id="7227-FBpp0076201"/>
<dbReference type="DNASU" id="39098"/>
<dbReference type="EnsemblMetazoa" id="FBtr0076473">
    <property type="protein sequence ID" value="FBpp0076201"/>
    <property type="gene ID" value="FBgn0036000"/>
</dbReference>
<dbReference type="GeneID" id="39098"/>
<dbReference type="KEGG" id="dme:Dmel_CG3434"/>
<dbReference type="UCSC" id="CG3434-RA">
    <property type="organism name" value="d. melanogaster"/>
</dbReference>
<dbReference type="AGR" id="FB:FBgn0036000"/>
<dbReference type="FlyBase" id="FBgn0036000">
    <property type="gene designation" value="CG3434"/>
</dbReference>
<dbReference type="VEuPathDB" id="VectorBase:FBgn0036000"/>
<dbReference type="eggNOG" id="KOG3909">
    <property type="taxonomic scope" value="Eukaryota"/>
</dbReference>
<dbReference type="GeneTree" id="ENSGT00530000063679"/>
<dbReference type="HOGENOM" id="CLU_037350_0_0_1"/>
<dbReference type="InParanoid" id="Q9VSZ6"/>
<dbReference type="OMA" id="VPHIAHD"/>
<dbReference type="OrthoDB" id="27601at2759"/>
<dbReference type="PhylomeDB" id="Q9VSZ6"/>
<dbReference type="BioGRID-ORCS" id="39098">
    <property type="hits" value="0 hits in 1 CRISPR screen"/>
</dbReference>
<dbReference type="GenomeRNAi" id="39098"/>
<dbReference type="PRO" id="PR:Q9VSZ6"/>
<dbReference type="Proteomes" id="UP000000803">
    <property type="component" value="Chromosome 3L"/>
</dbReference>
<dbReference type="Bgee" id="FBgn0036000">
    <property type="expression patterns" value="Expressed in eye disc (Drosophila) and 53 other cell types or tissues"/>
</dbReference>
<dbReference type="GO" id="GO:0032473">
    <property type="term" value="C:cytoplasmic side of mitochondrial outer membrane"/>
    <property type="evidence" value="ECO:0000250"/>
    <property type="project" value="FlyBase"/>
</dbReference>
<dbReference type="GO" id="GO:0120507">
    <property type="term" value="C:tRNA-guanine transglycosylase complex"/>
    <property type="evidence" value="ECO:0000250"/>
    <property type="project" value="FlyBase"/>
</dbReference>
<dbReference type="GO" id="GO:0046872">
    <property type="term" value="F:metal ion binding"/>
    <property type="evidence" value="ECO:0007669"/>
    <property type="project" value="UniProtKB-KW"/>
</dbReference>
<dbReference type="GO" id="GO:0008479">
    <property type="term" value="F:tRNA-guanosine(34) queuine transglycosylase activity"/>
    <property type="evidence" value="ECO:0007669"/>
    <property type="project" value="UniProtKB-UniRule"/>
</dbReference>
<dbReference type="GO" id="GO:0101030">
    <property type="term" value="P:tRNA-guanine transglycosylation"/>
    <property type="evidence" value="ECO:0000250"/>
    <property type="project" value="FlyBase"/>
</dbReference>
<dbReference type="FunFam" id="3.20.20.105:FF:000008">
    <property type="entry name" value="Queuine tRNA-ribosyltransferase accessory subunit 2"/>
    <property type="match status" value="1"/>
</dbReference>
<dbReference type="Gene3D" id="3.20.20.105">
    <property type="entry name" value="Queuine tRNA-ribosyltransferase-like"/>
    <property type="match status" value="1"/>
</dbReference>
<dbReference type="HAMAP" id="MF_03043">
    <property type="entry name" value="QTRT2"/>
    <property type="match status" value="1"/>
</dbReference>
<dbReference type="InterPro" id="IPR028592">
    <property type="entry name" value="QTRTD1"/>
</dbReference>
<dbReference type="InterPro" id="IPR050852">
    <property type="entry name" value="Queuine_tRNA-ribosyltrfase"/>
</dbReference>
<dbReference type="InterPro" id="IPR036511">
    <property type="entry name" value="TGT-like_sf"/>
</dbReference>
<dbReference type="InterPro" id="IPR002616">
    <property type="entry name" value="tRNA_ribo_trans-like"/>
</dbReference>
<dbReference type="NCBIfam" id="TIGR00449">
    <property type="entry name" value="tgt_general"/>
    <property type="match status" value="1"/>
</dbReference>
<dbReference type="PANTHER" id="PTHR46064">
    <property type="entry name" value="QUEUINE TRNA-RIBOSYLTRANSFERASE ACCESSORY SUBUNIT 2"/>
    <property type="match status" value="1"/>
</dbReference>
<dbReference type="PANTHER" id="PTHR46064:SF1">
    <property type="entry name" value="QUEUINE TRNA-RIBOSYLTRANSFERASE ACCESSORY SUBUNIT 2"/>
    <property type="match status" value="1"/>
</dbReference>
<dbReference type="Pfam" id="PF01702">
    <property type="entry name" value="TGT"/>
    <property type="match status" value="1"/>
</dbReference>
<dbReference type="SUPFAM" id="SSF51713">
    <property type="entry name" value="tRNA-guanine transglycosylase"/>
    <property type="match status" value="1"/>
</dbReference>
<keyword id="KW-0963">Cytoplasm</keyword>
<keyword id="KW-0479">Metal-binding</keyword>
<keyword id="KW-1185">Reference proteome</keyword>
<keyword id="KW-0819">tRNA processing</keyword>
<keyword id="KW-0862">Zinc</keyword>